<evidence type="ECO:0000250" key="1"/>
<evidence type="ECO:0000255" key="2">
    <source>
        <dbReference type="PROSITE-ProRule" id="PRU01015"/>
    </source>
</evidence>
<feature type="chain" id="PRO_0000373918" description="Protein arginine N-methyltransferase 7">
    <location>
        <begin position="1"/>
        <end position="690"/>
    </location>
</feature>
<feature type="domain" description="SAM-dependent MTase PRMT-type 1" evidence="2">
    <location>
        <begin position="14"/>
        <end position="357"/>
    </location>
</feature>
<feature type="domain" description="SAM-dependent MTase PRMT-type 2" evidence="2">
    <location>
        <begin position="366"/>
        <end position="690"/>
    </location>
</feature>
<comment type="function">
    <text evidence="1">Essential arginine methyltransferase that can both catalyze the formation of omega-N monomethylarginine (MMA) and symmetrical dimethylarginine (sDMA). Specifically mediates the symmetrical dimethylation of arginine residues in the small nuclear ribonucleoproteins SmD1 and SmD3 (By similarity).</text>
</comment>
<comment type="similarity">
    <text evidence="2">Belongs to the class I-like SAM-binding methyltransferase superfamily. Protein arginine N-methyltransferase family. PRMT7 subfamily.</text>
</comment>
<protein>
    <recommendedName>
        <fullName>Protein arginine N-methyltransferase 7</fullName>
        <ecNumber>2.1.1.-</ecNumber>
    </recommendedName>
</protein>
<proteinExistence type="inferred from homology"/>
<reference key="1">
    <citation type="journal article" date="2007" name="Nature">
        <title>Evolution of genes and genomes on the Drosophila phylogeny.</title>
        <authorList>
            <consortium name="Drosophila 12 genomes consortium"/>
        </authorList>
    </citation>
    <scope>NUCLEOTIDE SEQUENCE [LARGE SCALE GENOMIC DNA]</scope>
    <source>
        <strain>Rob3c / Tucson 14021-0248.25</strain>
    </source>
</reference>
<keyword id="KW-0489">Methyltransferase</keyword>
<keyword id="KW-1185">Reference proteome</keyword>
<keyword id="KW-0677">Repeat</keyword>
<keyword id="KW-0949">S-adenosyl-L-methionine</keyword>
<keyword id="KW-0808">Transferase</keyword>
<dbReference type="EC" id="2.1.1.-"/>
<dbReference type="EMBL" id="CH480824">
    <property type="protein sequence ID" value="EDW56887.1"/>
    <property type="molecule type" value="Genomic_DNA"/>
</dbReference>
<dbReference type="RefSeq" id="XP_002040022.1">
    <property type="nucleotide sequence ID" value="XM_002039986.1"/>
</dbReference>
<dbReference type="SMR" id="B4I8G2"/>
<dbReference type="STRING" id="7238.B4I8G2"/>
<dbReference type="EnsemblMetazoa" id="FBtr0198571">
    <property type="protein sequence ID" value="FBpp0197063"/>
    <property type="gene ID" value="FBgn0170504"/>
</dbReference>
<dbReference type="EnsemblMetazoa" id="XM_002039986.2">
    <property type="protein sequence ID" value="XP_002040022.2"/>
    <property type="gene ID" value="LOC6615651"/>
</dbReference>
<dbReference type="GeneID" id="6615651"/>
<dbReference type="KEGG" id="dse:6615651"/>
<dbReference type="CTD" id="37664"/>
<dbReference type="HOGENOM" id="CLU_015180_0_0_1"/>
<dbReference type="OMA" id="CHHDEYS"/>
<dbReference type="PhylomeDB" id="B4I8G2"/>
<dbReference type="Proteomes" id="UP000001292">
    <property type="component" value="Unassembled WGS sequence"/>
</dbReference>
<dbReference type="GO" id="GO:0042054">
    <property type="term" value="F:histone methyltransferase activity"/>
    <property type="evidence" value="ECO:0007669"/>
    <property type="project" value="TreeGrafter"/>
</dbReference>
<dbReference type="GO" id="GO:0035243">
    <property type="term" value="F:protein-arginine omega-N symmetric methyltransferase activity"/>
    <property type="evidence" value="ECO:0000250"/>
    <property type="project" value="UniProtKB"/>
</dbReference>
<dbReference type="GO" id="GO:0018216">
    <property type="term" value="P:peptidyl-arginine methylation"/>
    <property type="evidence" value="ECO:0000250"/>
    <property type="project" value="UniProtKB"/>
</dbReference>
<dbReference type="CDD" id="cd02440">
    <property type="entry name" value="AdoMet_MTases"/>
    <property type="match status" value="1"/>
</dbReference>
<dbReference type="FunFam" id="2.70.160.11:FF:000014">
    <property type="entry name" value="Protein arginine N-methyltransferase 7"/>
    <property type="match status" value="1"/>
</dbReference>
<dbReference type="FunFam" id="2.70.160.11:FF:000019">
    <property type="entry name" value="Protein arginine N-methyltransferase 7"/>
    <property type="match status" value="1"/>
</dbReference>
<dbReference type="FunFam" id="3.40.50.150:FF:000070">
    <property type="entry name" value="Protein arginine N-methyltransferase 7"/>
    <property type="match status" value="1"/>
</dbReference>
<dbReference type="FunFam" id="3.40.50.150:FF:000071">
    <property type="entry name" value="Protein arginine N-methyltransferase 7"/>
    <property type="match status" value="1"/>
</dbReference>
<dbReference type="Gene3D" id="2.70.160.11">
    <property type="entry name" value="Hnrnp arginine n-methyltransferase1"/>
    <property type="match status" value="2"/>
</dbReference>
<dbReference type="Gene3D" id="3.40.50.150">
    <property type="entry name" value="Vaccinia Virus protein VP39"/>
    <property type="match status" value="2"/>
</dbReference>
<dbReference type="InterPro" id="IPR025799">
    <property type="entry name" value="Arg_MeTrfase"/>
</dbReference>
<dbReference type="InterPro" id="IPR014644">
    <property type="entry name" value="MeTrfase_PRMT7"/>
</dbReference>
<dbReference type="InterPro" id="IPR055135">
    <property type="entry name" value="PRMT_dom"/>
</dbReference>
<dbReference type="InterPro" id="IPR029063">
    <property type="entry name" value="SAM-dependent_MTases_sf"/>
</dbReference>
<dbReference type="PANTHER" id="PTHR11006">
    <property type="entry name" value="PROTEIN ARGININE N-METHYLTRANSFERASE"/>
    <property type="match status" value="1"/>
</dbReference>
<dbReference type="PANTHER" id="PTHR11006:SF4">
    <property type="entry name" value="PROTEIN ARGININE N-METHYLTRANSFERASE 7"/>
    <property type="match status" value="1"/>
</dbReference>
<dbReference type="Pfam" id="PF06325">
    <property type="entry name" value="PrmA"/>
    <property type="match status" value="1"/>
</dbReference>
<dbReference type="Pfam" id="PF22528">
    <property type="entry name" value="PRMT_C"/>
    <property type="match status" value="1"/>
</dbReference>
<dbReference type="PIRSF" id="PIRSF036946">
    <property type="entry name" value="Arg_N-mtase"/>
    <property type="match status" value="1"/>
</dbReference>
<dbReference type="SUPFAM" id="SSF53335">
    <property type="entry name" value="S-adenosyl-L-methionine-dependent methyltransferases"/>
    <property type="match status" value="2"/>
</dbReference>
<dbReference type="PROSITE" id="PS51678">
    <property type="entry name" value="SAM_MT_PRMT"/>
    <property type="match status" value="2"/>
</dbReference>
<name>ANM7_DROSE</name>
<organism>
    <name type="scientific">Drosophila sechellia</name>
    <name type="common">Fruit fly</name>
    <dbReference type="NCBI Taxonomy" id="7238"/>
    <lineage>
        <taxon>Eukaryota</taxon>
        <taxon>Metazoa</taxon>
        <taxon>Ecdysozoa</taxon>
        <taxon>Arthropoda</taxon>
        <taxon>Hexapoda</taxon>
        <taxon>Insecta</taxon>
        <taxon>Pterygota</taxon>
        <taxon>Neoptera</taxon>
        <taxon>Endopterygota</taxon>
        <taxon>Diptera</taxon>
        <taxon>Brachycera</taxon>
        <taxon>Muscomorpha</taxon>
        <taxon>Ephydroidea</taxon>
        <taxon>Drosophilidae</taxon>
        <taxon>Drosophila</taxon>
        <taxon>Sophophora</taxon>
    </lineage>
</organism>
<accession>B4I8G2</accession>
<gene>
    <name type="primary">Art7</name>
    <name type="ORF">GM15586</name>
</gene>
<sequence>MSCFLQVMNPITGQNSWQERGDDYDYHLEVANAGFGDMLHDWERNQKYFGALRKTIAGMREAGREVHVLDIGTGTGILSMMALAAGADSVTACEAFLPMANCAEKILAANGAGDKVRLIRKRSTEIQVGEDMPRKANLLVAELLDTELIGEGAIGIYNHAHAELLTEDALCIPARARCYAQVAQSPLAAQWNSLKTIANLDGEPLLHPPEQLKSCQGEAALHDVQLSQLPISAFRPLTDPVEIFQFDFQRKQEREKQRAQLLKLQSKQPGAAELVFYWWDIQLDDGGEILLSCAPYWAHPQLKELAAEKAKDHPLPNVVPWRDHWMQAIYYIPKPLQLLEAGKSFHLSCHHDEYSLWFDAREEAPTKSVRRHTCTCDLHMTYSRGRIGQLNQSPRNKRYLRYLEESIEAEKSNVLVLGNGCLLGLASSALGAASVLLHEPHRFSRRLLESIVKHNQLKNVQFLDKVEELEDSQLAALTHIFAEPYFLNAILPWDNFYFGSLLTKIKDRLPEGVKISPCSARIYALPVEFLDLHKIRAPVGSCEGFDLRLFDEMVERSAEQAVSLVEAQPLWEYPCRALSEPQEVLSVDFSNFGQEHSLKGSIELKHTGICNGVALWVYWQLVEDNSPRSIVSSGPSEPVVPGEFVKWDMFVRQGVHFPRKPKDAVTHLEWSTDFKPLLGELNFSFGQKKL</sequence>